<reference key="1">
    <citation type="journal article" date="2009" name="PLoS Genet.">
        <title>Organised genome dynamics in the Escherichia coli species results in highly diverse adaptive paths.</title>
        <authorList>
            <person name="Touchon M."/>
            <person name="Hoede C."/>
            <person name="Tenaillon O."/>
            <person name="Barbe V."/>
            <person name="Baeriswyl S."/>
            <person name="Bidet P."/>
            <person name="Bingen E."/>
            <person name="Bonacorsi S."/>
            <person name="Bouchier C."/>
            <person name="Bouvet O."/>
            <person name="Calteau A."/>
            <person name="Chiapello H."/>
            <person name="Clermont O."/>
            <person name="Cruveiller S."/>
            <person name="Danchin A."/>
            <person name="Diard M."/>
            <person name="Dossat C."/>
            <person name="Karoui M.E."/>
            <person name="Frapy E."/>
            <person name="Garry L."/>
            <person name="Ghigo J.M."/>
            <person name="Gilles A.M."/>
            <person name="Johnson J."/>
            <person name="Le Bouguenec C."/>
            <person name="Lescat M."/>
            <person name="Mangenot S."/>
            <person name="Martinez-Jehanne V."/>
            <person name="Matic I."/>
            <person name="Nassif X."/>
            <person name="Oztas S."/>
            <person name="Petit M.A."/>
            <person name="Pichon C."/>
            <person name="Rouy Z."/>
            <person name="Ruf C.S."/>
            <person name="Schneider D."/>
            <person name="Tourret J."/>
            <person name="Vacherie B."/>
            <person name="Vallenet D."/>
            <person name="Medigue C."/>
            <person name="Rocha E.P.C."/>
            <person name="Denamur E."/>
        </authorList>
    </citation>
    <scope>NUCLEOTIDE SEQUENCE [LARGE SCALE GENOMIC DNA]</scope>
    <source>
        <strain>IAI1</strain>
    </source>
</reference>
<comment type="function">
    <text evidence="1">Required for the insertion and/or proper folding and/or complex formation of integral membrane proteins into the membrane. Involved in integration of membrane proteins that insert both dependently and independently of the Sec translocase complex, as well as at least some lipoproteins. Aids folding of multispanning membrane proteins.</text>
</comment>
<comment type="subunit">
    <text evidence="1">Interacts with the Sec translocase complex via SecD. Specifically interacts with transmembrane segments of nascent integral membrane proteins during membrane integration.</text>
</comment>
<comment type="subcellular location">
    <subcellularLocation>
        <location evidence="1">Cell inner membrane</location>
        <topology evidence="1">Multi-pass membrane protein</topology>
    </subcellularLocation>
</comment>
<comment type="similarity">
    <text evidence="1">Belongs to the OXA1/ALB3/YidC family. Type 1 subfamily.</text>
</comment>
<proteinExistence type="inferred from homology"/>
<keyword id="KW-0997">Cell inner membrane</keyword>
<keyword id="KW-1003">Cell membrane</keyword>
<keyword id="KW-0143">Chaperone</keyword>
<keyword id="KW-0472">Membrane</keyword>
<keyword id="KW-0653">Protein transport</keyword>
<keyword id="KW-0812">Transmembrane</keyword>
<keyword id="KW-1133">Transmembrane helix</keyword>
<keyword id="KW-0813">Transport</keyword>
<gene>
    <name evidence="1" type="primary">yidC</name>
    <name type="ordered locus">ECIAI1_3885</name>
</gene>
<protein>
    <recommendedName>
        <fullName evidence="1">Membrane protein insertase YidC</fullName>
    </recommendedName>
    <alternativeName>
        <fullName evidence="1">Foldase YidC</fullName>
    </alternativeName>
    <alternativeName>
        <fullName evidence="1">Membrane integrase YidC</fullName>
    </alternativeName>
    <alternativeName>
        <fullName evidence="1">Membrane protein YidC</fullName>
    </alternativeName>
</protein>
<organism>
    <name type="scientific">Escherichia coli O8 (strain IAI1)</name>
    <dbReference type="NCBI Taxonomy" id="585034"/>
    <lineage>
        <taxon>Bacteria</taxon>
        <taxon>Pseudomonadati</taxon>
        <taxon>Pseudomonadota</taxon>
        <taxon>Gammaproteobacteria</taxon>
        <taxon>Enterobacterales</taxon>
        <taxon>Enterobacteriaceae</taxon>
        <taxon>Escherichia</taxon>
    </lineage>
</organism>
<accession>B7M558</accession>
<name>YIDC_ECO8A</name>
<sequence length="548" mass="61540">MDSQRNLLVIALLFVSFMIWQAWEQDKNPQPQAQQTTQTTTTAAGSAADQGVPASGQGKLISVKTDVLDLTINTRGGDVEQALLPAYPKELNSTQPFQLLETSPQFIYQAQSGLTGRDGPDNPANGPRPLYNVEKDAYVLAEGQNELQVPMTYTDAAGNTFTKTFVLKRGDYAVNVNYNVQNAGEKPLEISTFGQLKQSITLPPHLDTGSSNFALHTFRGAAYSTPDEKYEKYKFDTIADNENLNISSKGGWVAMLQQYFATAWIPHNDGTNNFYTANLGNGIAAIGYKSQPVLVQPGQTGAMNSTLWVGPEIQDKMAAVAPHLDLTVDYGWLWFISQPLFKLLKWIHSFVGNWGFSIIIITFIVRGIMYPLTKAQYTSMAKMRMLQPKIQAMRERLGDDKQRISQEMMALYKAEKVNPLGGCFPLLIQMPIFLALYYMLMGSVELRQAPFALWIHDLSAQDPYYILPILMGVTMFFIQKMSPTTVTDPMQQKIMTFMPVIFTVFFLWFPSGLVLYYIVSNLVTIIQQQLIYRGLEKRGLHSREKKKS</sequence>
<evidence type="ECO:0000255" key="1">
    <source>
        <dbReference type="HAMAP-Rule" id="MF_01810"/>
    </source>
</evidence>
<evidence type="ECO:0000256" key="2">
    <source>
        <dbReference type="SAM" id="MobiDB-lite"/>
    </source>
</evidence>
<dbReference type="EMBL" id="CU928160">
    <property type="protein sequence ID" value="CAR00680.1"/>
    <property type="molecule type" value="Genomic_DNA"/>
</dbReference>
<dbReference type="RefSeq" id="WP_000378258.1">
    <property type="nucleotide sequence ID" value="NC_011741.1"/>
</dbReference>
<dbReference type="SMR" id="B7M558"/>
<dbReference type="GeneID" id="93778448"/>
<dbReference type="KEGG" id="ecr:ECIAI1_3885"/>
<dbReference type="HOGENOM" id="CLU_016535_3_0_6"/>
<dbReference type="GO" id="GO:0005886">
    <property type="term" value="C:plasma membrane"/>
    <property type="evidence" value="ECO:0007669"/>
    <property type="project" value="UniProtKB-SubCell"/>
</dbReference>
<dbReference type="GO" id="GO:0032977">
    <property type="term" value="F:membrane insertase activity"/>
    <property type="evidence" value="ECO:0007669"/>
    <property type="project" value="InterPro"/>
</dbReference>
<dbReference type="GO" id="GO:0051205">
    <property type="term" value="P:protein insertion into membrane"/>
    <property type="evidence" value="ECO:0007669"/>
    <property type="project" value="TreeGrafter"/>
</dbReference>
<dbReference type="GO" id="GO:0015031">
    <property type="term" value="P:protein transport"/>
    <property type="evidence" value="ECO:0007669"/>
    <property type="project" value="UniProtKB-KW"/>
</dbReference>
<dbReference type="CDD" id="cd20070">
    <property type="entry name" value="5TM_YidC_Alb3"/>
    <property type="match status" value="1"/>
</dbReference>
<dbReference type="CDD" id="cd19961">
    <property type="entry name" value="EcYidC-like_peri"/>
    <property type="match status" value="1"/>
</dbReference>
<dbReference type="FunFam" id="2.70.98.90:FF:000001">
    <property type="entry name" value="Membrane protein insertase YidC"/>
    <property type="match status" value="1"/>
</dbReference>
<dbReference type="Gene3D" id="2.70.98.90">
    <property type="match status" value="1"/>
</dbReference>
<dbReference type="HAMAP" id="MF_01810">
    <property type="entry name" value="YidC_type1"/>
    <property type="match status" value="1"/>
</dbReference>
<dbReference type="InterPro" id="IPR019998">
    <property type="entry name" value="Membr_insert_YidC"/>
</dbReference>
<dbReference type="InterPro" id="IPR028053">
    <property type="entry name" value="Membr_insert_YidC_N"/>
</dbReference>
<dbReference type="InterPro" id="IPR001708">
    <property type="entry name" value="YidC/ALB3/OXA1/COX18"/>
</dbReference>
<dbReference type="InterPro" id="IPR028055">
    <property type="entry name" value="YidC/Oxa/ALB_C"/>
</dbReference>
<dbReference type="InterPro" id="IPR047196">
    <property type="entry name" value="YidC_ALB_C"/>
</dbReference>
<dbReference type="InterPro" id="IPR038221">
    <property type="entry name" value="YidC_periplasmic_sf"/>
</dbReference>
<dbReference type="NCBIfam" id="NF002351">
    <property type="entry name" value="PRK01318.1-1"/>
    <property type="match status" value="1"/>
</dbReference>
<dbReference type="NCBIfam" id="NF002352">
    <property type="entry name" value="PRK01318.1-3"/>
    <property type="match status" value="1"/>
</dbReference>
<dbReference type="NCBIfam" id="NF002353">
    <property type="entry name" value="PRK01318.1-4"/>
    <property type="match status" value="1"/>
</dbReference>
<dbReference type="NCBIfam" id="TIGR03593">
    <property type="entry name" value="yidC_nterm"/>
    <property type="match status" value="1"/>
</dbReference>
<dbReference type="NCBIfam" id="TIGR03592">
    <property type="entry name" value="yidC_oxa1_cterm"/>
    <property type="match status" value="1"/>
</dbReference>
<dbReference type="PANTHER" id="PTHR12428:SF65">
    <property type="entry name" value="CYTOCHROME C OXIDASE ASSEMBLY PROTEIN COX18, MITOCHONDRIAL"/>
    <property type="match status" value="1"/>
</dbReference>
<dbReference type="PANTHER" id="PTHR12428">
    <property type="entry name" value="OXA1"/>
    <property type="match status" value="1"/>
</dbReference>
<dbReference type="Pfam" id="PF02096">
    <property type="entry name" value="60KD_IMP"/>
    <property type="match status" value="1"/>
</dbReference>
<dbReference type="Pfam" id="PF14849">
    <property type="entry name" value="YidC_periplas"/>
    <property type="match status" value="1"/>
</dbReference>
<dbReference type="PRINTS" id="PR00701">
    <property type="entry name" value="60KDINNERMP"/>
</dbReference>
<dbReference type="PRINTS" id="PR01900">
    <property type="entry name" value="YIDCPROTEIN"/>
</dbReference>
<feature type="chain" id="PRO_1000187661" description="Membrane protein insertase YidC">
    <location>
        <begin position="1"/>
        <end position="548"/>
    </location>
</feature>
<feature type="transmembrane region" description="Helical" evidence="1">
    <location>
        <begin position="6"/>
        <end position="26"/>
    </location>
</feature>
<feature type="transmembrane region" description="Helical" evidence="1">
    <location>
        <begin position="350"/>
        <end position="370"/>
    </location>
</feature>
<feature type="transmembrane region" description="Helical" evidence="1">
    <location>
        <begin position="420"/>
        <end position="440"/>
    </location>
</feature>
<feature type="transmembrane region" description="Helical" evidence="1">
    <location>
        <begin position="458"/>
        <end position="478"/>
    </location>
</feature>
<feature type="transmembrane region" description="Helical" evidence="1">
    <location>
        <begin position="499"/>
        <end position="519"/>
    </location>
</feature>
<feature type="region of interest" description="Disordered" evidence="2">
    <location>
        <begin position="28"/>
        <end position="55"/>
    </location>
</feature>
<feature type="compositionally biased region" description="Low complexity" evidence="2">
    <location>
        <begin position="30"/>
        <end position="50"/>
    </location>
</feature>